<accession>Q91830</accession>
<keyword id="KW-0156">Chromatin regulator</keyword>
<keyword id="KW-0233">DNA recombination</keyword>
<keyword id="KW-0479">Metal-binding</keyword>
<keyword id="KW-0539">Nucleus</keyword>
<keyword id="KW-1185">Reference proteome</keyword>
<keyword id="KW-0862">Zinc</keyword>
<keyword id="KW-0863">Zinc-finger</keyword>
<gene>
    <name type="primary">rag2</name>
</gene>
<sequence>MTLRIVTPGSNTSLIQPGFSLLHFSSHVFYLGQKGWPKRSCPTGVFLLDLKNNDLKLRPATFTNDSCYLPPLRHPAVCSFSASQGGEITQYLIHGGKTPNNEISHKLYIMTMAFPVNKRFSLCCSEKDLAGDVPEARYGHSMNVVFSRGKNAVVMFGGRSYMPLNQRTTENWNNVIDCEPLVYLIDLQFGCSTSFNLRELQDGLSFHVSLARNDTVYIFGGHSLGNNFRPPNVYKIKVDLPLGSPAVSCTVINSKISFSSSIVTQTSPDEFVIVGGYESDSQKRLICNGVFLDDETIDIQEIETPDWTGEIKHSKTWFGADMGKGAVLFGIPVDNKHQSTDCSFFFYVLNFGDNDPALQTCSQGSTEEQEDSMPLEDSEEFTFNRDGNIFDEDTYNEDDEDDESVTGYWIKCCPDCDMDRNTWEPFYSTELNKPSMIFCSKDGGHWVHSQCMDLSETMLKYLSQNNIKYFCNEHVEVARGVQTPEKTPPVKKTSLKSVRKRTTINRLSAVKKSFLRRLFE</sequence>
<reference key="1">
    <citation type="journal article" date="1993" name="J. Immunol.">
        <title>Characterization and expression of recombination activating genes (RAG-1 and RAG-2) in Xenopus laevis.</title>
        <authorList>
            <person name="Greenhalgh P.H."/>
            <person name="Olesen C.E."/>
            <person name="Steiner L.A."/>
        </authorList>
    </citation>
    <scope>NUCLEOTIDE SEQUENCE [GENOMIC DNA]</scope>
    <scope>TISSUE SPECIFICITY</scope>
    <scope>DEVELOPMENTAL STAGE</scope>
    <source>
        <strain>HD-1</strain>
    </source>
</reference>
<evidence type="ECO:0000250" key="1"/>
<evidence type="ECO:0000269" key="2">
    <source>
    </source>
</evidence>
<evidence type="ECO:0000305" key="3"/>
<organism>
    <name type="scientific">Xenopus laevis</name>
    <name type="common">African clawed frog</name>
    <dbReference type="NCBI Taxonomy" id="8355"/>
    <lineage>
        <taxon>Eukaryota</taxon>
        <taxon>Metazoa</taxon>
        <taxon>Chordata</taxon>
        <taxon>Craniata</taxon>
        <taxon>Vertebrata</taxon>
        <taxon>Euteleostomi</taxon>
        <taxon>Amphibia</taxon>
        <taxon>Batrachia</taxon>
        <taxon>Anura</taxon>
        <taxon>Pipoidea</taxon>
        <taxon>Pipidae</taxon>
        <taxon>Xenopodinae</taxon>
        <taxon>Xenopus</taxon>
        <taxon>Xenopus</taxon>
    </lineage>
</organism>
<feature type="chain" id="PRO_0000167143" description="V(D)J recombination-activating protein 2">
    <location>
        <begin position="1"/>
        <end position="520"/>
    </location>
</feature>
<feature type="zinc finger region" description="PHD-type; atypical">
    <location>
        <begin position="415"/>
        <end position="477"/>
    </location>
</feature>
<feature type="binding site" evidence="1">
    <location>
        <position position="412"/>
    </location>
    <ligand>
        <name>Zn(2+)</name>
        <dbReference type="ChEBI" id="CHEBI:29105"/>
        <label>1</label>
    </ligand>
</feature>
<feature type="binding site" evidence="1">
    <location>
        <position position="416"/>
    </location>
    <ligand>
        <name>Zn(2+)</name>
        <dbReference type="ChEBI" id="CHEBI:29105"/>
        <label>1</label>
    </ligand>
</feature>
<feature type="binding site" evidence="1">
    <location>
        <position position="439"/>
    </location>
    <ligand>
        <name>Zn(2+)</name>
        <dbReference type="ChEBI" id="CHEBI:29105"/>
        <label>2</label>
    </ligand>
</feature>
<feature type="binding site" evidence="1">
    <location>
        <position position="445"/>
    </location>
    <ligand>
        <name>Zn(2+)</name>
        <dbReference type="ChEBI" id="CHEBI:29105"/>
        <label>2</label>
    </ligand>
</feature>
<feature type="binding site" evidence="1">
    <location>
        <position position="448"/>
    </location>
    <ligand>
        <name>Zn(2+)</name>
        <dbReference type="ChEBI" id="CHEBI:29105"/>
        <label>1</label>
    </ligand>
</feature>
<feature type="binding site" evidence="1">
    <location>
        <position position="451"/>
    </location>
    <ligand>
        <name>Zn(2+)</name>
        <dbReference type="ChEBI" id="CHEBI:29105"/>
        <label>1</label>
    </ligand>
</feature>
<feature type="binding site" evidence="1">
    <location>
        <position position="471"/>
    </location>
    <ligand>
        <name>Zn(2+)</name>
        <dbReference type="ChEBI" id="CHEBI:29105"/>
        <label>2</label>
    </ligand>
</feature>
<feature type="binding site" evidence="1">
    <location>
        <position position="474"/>
    </location>
    <ligand>
        <name>Zn(2+)</name>
        <dbReference type="ChEBI" id="CHEBI:29105"/>
        <label>2</label>
    </ligand>
</feature>
<proteinExistence type="evidence at transcript level"/>
<comment type="function">
    <text evidence="1">Core component of the RAG complex, a multiprotein complex that mediates the DNA cleavage phase during V(D)J recombination. V(D)J recombination assembles a diverse repertoire of immunoglobulin and T-cell receptor genes in developing B and T lymphocytes through rearrangement of different V (variable), in some cases D (diversity), and J (joining) gene segments. DNA cleavage by the RAG complex occurs in 2 steps: a first nick is introduced in the top strand immediately upstream of the heptamer, generating a 3'-hydroxyl group that can attack the phosphodiester bond on the opposite strand in a direct transesterification reaction, thereby creating 4 DNA ends: 2 hairpin coding ends and 2 blunt, 5'-phosphorylated ends. In the RAG complex, rag2 is not the catalytic component but is required for all known catalytic activities mediated by RAG1. It probably acts as a sensor of chromatin state that recruits the RAG complex to H3K4me3 (By similarity).</text>
</comment>
<comment type="subunit">
    <text evidence="1">Component of the RAG complex composed of core components rag1 and rag2.</text>
</comment>
<comment type="subcellular location">
    <subcellularLocation>
        <location evidence="1">Nucleus</location>
    </subcellularLocation>
</comment>
<comment type="tissue specificity">
    <text evidence="2">Expressed within the thymus, liver and spleen in juvenile frogs, and within the thymus and bone marrow of adults. A lower level expression is seen in the ovaries.</text>
</comment>
<comment type="developmental stage">
    <text evidence="2">First detected in the thymus during day 4 of development. Expression then increases in the thymus for at least three weeks.</text>
</comment>
<comment type="domain">
    <text evidence="1">The atypical PHD-type zinc finger recognizes and binds histone H3 trimethylated on 'Lys-4' (H3K4me3). The atypical PHD-type zinc finger also binds various phosphoinositides (By similarity).</text>
</comment>
<comment type="similarity">
    <text evidence="3">Belongs to the RAG2 family.</text>
</comment>
<dbReference type="EMBL" id="L19325">
    <property type="protein sequence ID" value="AAA49943.1"/>
    <property type="molecule type" value="Genomic_DNA"/>
</dbReference>
<dbReference type="PIR" id="I51556">
    <property type="entry name" value="I51556"/>
</dbReference>
<dbReference type="RefSeq" id="XP_018114730.1">
    <property type="nucleotide sequence ID" value="XM_018259241.1"/>
</dbReference>
<dbReference type="RefSeq" id="XP_018114731.1">
    <property type="nucleotide sequence ID" value="XM_018259242.1"/>
</dbReference>
<dbReference type="RefSeq" id="XP_018114732.1">
    <property type="nucleotide sequence ID" value="XM_018259243.1"/>
</dbReference>
<dbReference type="SMR" id="Q91830"/>
<dbReference type="DNASU" id="100037211"/>
<dbReference type="GeneID" id="100037211"/>
<dbReference type="AGR" id="Xenbase:XB-GENE-1018151"/>
<dbReference type="CTD" id="100037211"/>
<dbReference type="Xenbase" id="XB-GENE-1018151">
    <property type="gene designation" value="rag2.S"/>
</dbReference>
<dbReference type="OMA" id="MIFCSRG"/>
<dbReference type="OrthoDB" id="8512570at2759"/>
<dbReference type="Proteomes" id="UP000186698">
    <property type="component" value="Chromosome 4S"/>
</dbReference>
<dbReference type="Bgee" id="100037211">
    <property type="expression patterns" value="Expressed in egg cell and 17 other cell types or tissues"/>
</dbReference>
<dbReference type="GO" id="GO:0097519">
    <property type="term" value="C:DNA recombinase complex"/>
    <property type="evidence" value="ECO:0000318"/>
    <property type="project" value="GO_Central"/>
</dbReference>
<dbReference type="GO" id="GO:0005634">
    <property type="term" value="C:nucleus"/>
    <property type="evidence" value="ECO:0007669"/>
    <property type="project" value="UniProtKB-SubCell"/>
</dbReference>
<dbReference type="GO" id="GO:0003682">
    <property type="term" value="F:chromatin binding"/>
    <property type="evidence" value="ECO:0000250"/>
    <property type="project" value="UniProtKB"/>
</dbReference>
<dbReference type="GO" id="GO:0140002">
    <property type="term" value="F:histone H3K4me3 reader activity"/>
    <property type="evidence" value="ECO:0000250"/>
    <property type="project" value="UniProtKB"/>
</dbReference>
<dbReference type="GO" id="GO:0035091">
    <property type="term" value="F:phosphatidylinositol binding"/>
    <property type="evidence" value="ECO:0000250"/>
    <property type="project" value="UniProtKB"/>
</dbReference>
<dbReference type="GO" id="GO:0005547">
    <property type="term" value="F:phosphatidylinositol-3,4,5-trisphosphate binding"/>
    <property type="evidence" value="ECO:0000250"/>
    <property type="project" value="UniProtKB"/>
</dbReference>
<dbReference type="GO" id="GO:0043325">
    <property type="term" value="F:phosphatidylinositol-3,4-bisphosphate binding"/>
    <property type="evidence" value="ECO:0000250"/>
    <property type="project" value="UniProtKB"/>
</dbReference>
<dbReference type="GO" id="GO:0080025">
    <property type="term" value="F:phosphatidylinositol-3,5-bisphosphate binding"/>
    <property type="evidence" value="ECO:0000250"/>
    <property type="project" value="UniProtKB"/>
</dbReference>
<dbReference type="GO" id="GO:0005546">
    <property type="term" value="F:phosphatidylinositol-4,5-bisphosphate binding"/>
    <property type="evidence" value="ECO:0000250"/>
    <property type="project" value="UniProtKB"/>
</dbReference>
<dbReference type="GO" id="GO:0043565">
    <property type="term" value="F:sequence-specific DNA binding"/>
    <property type="evidence" value="ECO:0000318"/>
    <property type="project" value="GO_Central"/>
</dbReference>
<dbReference type="GO" id="GO:0008270">
    <property type="term" value="F:zinc ion binding"/>
    <property type="evidence" value="ECO:0000250"/>
    <property type="project" value="UniProtKB"/>
</dbReference>
<dbReference type="GO" id="GO:0030183">
    <property type="term" value="P:B cell differentiation"/>
    <property type="evidence" value="ECO:0000250"/>
    <property type="project" value="UniProtKB"/>
</dbReference>
<dbReference type="GO" id="GO:0033077">
    <property type="term" value="P:T cell differentiation in thymus"/>
    <property type="evidence" value="ECO:0000250"/>
    <property type="project" value="UniProtKB"/>
</dbReference>
<dbReference type="GO" id="GO:0033151">
    <property type="term" value="P:V(D)J recombination"/>
    <property type="evidence" value="ECO:0000250"/>
    <property type="project" value="UniProtKB"/>
</dbReference>
<dbReference type="CDD" id="cd15569">
    <property type="entry name" value="PHD_RAG2"/>
    <property type="match status" value="1"/>
</dbReference>
<dbReference type="FunFam" id="2.120.10.80:FF:000047">
    <property type="entry name" value="V(D)J recombination-activating protein 2"/>
    <property type="match status" value="1"/>
</dbReference>
<dbReference type="Gene3D" id="2.120.10.80">
    <property type="entry name" value="Kelch-type beta propeller"/>
    <property type="match status" value="1"/>
</dbReference>
<dbReference type="Gene3D" id="3.30.160.290">
    <property type="entry name" value="Rag2 PHD finger"/>
    <property type="match status" value="1"/>
</dbReference>
<dbReference type="InterPro" id="IPR011043">
    <property type="entry name" value="Gal_Oxase/kelch_b-propeller"/>
</dbReference>
<dbReference type="InterPro" id="IPR015915">
    <property type="entry name" value="Kelch-typ_b-propeller"/>
</dbReference>
<dbReference type="InterPro" id="IPR004321">
    <property type="entry name" value="RAG2"/>
</dbReference>
<dbReference type="InterPro" id="IPR025162">
    <property type="entry name" value="RAG2_PHD"/>
</dbReference>
<dbReference type="InterPro" id="IPR011011">
    <property type="entry name" value="Znf_FYVE_PHD"/>
</dbReference>
<dbReference type="PANTHER" id="PTHR10960">
    <property type="entry name" value="V D J RECOMBINATION-ACTIVATING PROTEIN 2"/>
    <property type="match status" value="1"/>
</dbReference>
<dbReference type="PANTHER" id="PTHR10960:SF0">
    <property type="entry name" value="V(D)J RECOMBINATION-ACTIVATING PROTEIN 2"/>
    <property type="match status" value="1"/>
</dbReference>
<dbReference type="Pfam" id="PF03089">
    <property type="entry name" value="RAG2"/>
    <property type="match status" value="1"/>
</dbReference>
<dbReference type="Pfam" id="PF13341">
    <property type="entry name" value="RAG2_PHD"/>
    <property type="match status" value="1"/>
</dbReference>
<dbReference type="SUPFAM" id="SSF57903">
    <property type="entry name" value="FYVE/PHD zinc finger"/>
    <property type="match status" value="1"/>
</dbReference>
<dbReference type="SUPFAM" id="SSF50965">
    <property type="entry name" value="Galactose oxidase, central domain"/>
    <property type="match status" value="1"/>
</dbReference>
<name>RAG2_XENLA</name>
<protein>
    <recommendedName>
        <fullName>V(D)J recombination-activating protein 2</fullName>
        <shortName>RAG-2</shortName>
    </recommendedName>
</protein>